<comment type="function">
    <text evidence="2">GTP hydrolase that promotes the GTP-dependent binding of aminoacyl-tRNA to the A-site of ribosomes during protein biosynthesis.</text>
</comment>
<comment type="catalytic activity">
    <reaction evidence="2">
        <text>GTP + H2O = GDP + phosphate + H(+)</text>
        <dbReference type="Rhea" id="RHEA:19669"/>
        <dbReference type="ChEBI" id="CHEBI:15377"/>
        <dbReference type="ChEBI" id="CHEBI:15378"/>
        <dbReference type="ChEBI" id="CHEBI:37565"/>
        <dbReference type="ChEBI" id="CHEBI:43474"/>
        <dbReference type="ChEBI" id="CHEBI:58189"/>
        <dbReference type="EC" id="3.6.5.3"/>
    </reaction>
    <physiologicalReaction direction="left-to-right" evidence="2">
        <dbReference type="Rhea" id="RHEA:19670"/>
    </physiologicalReaction>
</comment>
<comment type="subunit">
    <text evidence="2">Monomer.</text>
</comment>
<comment type="subcellular location">
    <subcellularLocation>
        <location evidence="2">Cytoplasm</location>
    </subcellularLocation>
</comment>
<comment type="similarity">
    <text evidence="2">Belongs to the TRAFAC class translation factor GTPase superfamily. Classic translation factor GTPase family. EF-Tu/EF-1A subfamily.</text>
</comment>
<organism>
    <name type="scientific">Psychrobacter arcticus (strain DSM 17307 / VKM B-2377 / 273-4)</name>
    <dbReference type="NCBI Taxonomy" id="259536"/>
    <lineage>
        <taxon>Bacteria</taxon>
        <taxon>Pseudomonadati</taxon>
        <taxon>Pseudomonadota</taxon>
        <taxon>Gammaproteobacteria</taxon>
        <taxon>Moraxellales</taxon>
        <taxon>Moraxellaceae</taxon>
        <taxon>Psychrobacter</taxon>
    </lineage>
</organism>
<name>EFTU_PSYA2</name>
<gene>
    <name evidence="2" type="primary">tuf1</name>
    <name type="synonym">tufBa</name>
    <name type="ordered locus">Psyc_0383</name>
</gene>
<gene>
    <name evidence="2" type="primary">tuf2</name>
    <name type="synonym">tufBb</name>
    <name type="ordered locus">Psyc_1894</name>
</gene>
<sequence length="396" mass="43099">MAKAKFERLKPHVNVGTIGHVDHGKTTLTAAIATVAAITSGGEAKDYASIDSAPEEKARGITINTSHVEYDTPSRHYAHVDCPGHADYVKNMITGAAQMDGAILVVSATDGPMPQTREHILLSRQVGVPYIVVFMNKCDVVDDEELLELVEMEVRELLSDYDFPGDDTPIIHGSATEALKGSQEKYGQPAVVELLNVLDTYIPEPERDIDKAFLMPIEDVFSISGRGTVVTGRVESGIVRVGEEIEIVGIRDTQKTTCTGVEMFRKLLDEGRAGENCGVLLRGTKREDVQRGQVLAKPGSITPHTKFDAEVYVLSKEEGGRHTPFLNGYRPQFYFRTTDVTGAIQLQDGTEMVMPGDNVEMGVELIHPIAMDKGLRFAIREGGRTVGAGVVANVHV</sequence>
<proteinExistence type="inferred from homology"/>
<keyword id="KW-0963">Cytoplasm</keyword>
<keyword id="KW-0251">Elongation factor</keyword>
<keyword id="KW-0342">GTP-binding</keyword>
<keyword id="KW-0378">Hydrolase</keyword>
<keyword id="KW-0460">Magnesium</keyword>
<keyword id="KW-0479">Metal-binding</keyword>
<keyword id="KW-0547">Nucleotide-binding</keyword>
<keyword id="KW-0648">Protein biosynthesis</keyword>
<keyword id="KW-1185">Reference proteome</keyword>
<feature type="chain" id="PRO_0000337479" description="Elongation factor Tu">
    <location>
        <begin position="1"/>
        <end position="396"/>
    </location>
</feature>
<feature type="domain" description="tr-type G">
    <location>
        <begin position="10"/>
        <end position="206"/>
    </location>
</feature>
<feature type="region of interest" description="G1" evidence="1">
    <location>
        <begin position="19"/>
        <end position="26"/>
    </location>
</feature>
<feature type="region of interest" description="G2" evidence="1">
    <location>
        <begin position="60"/>
        <end position="64"/>
    </location>
</feature>
<feature type="region of interest" description="G3" evidence="1">
    <location>
        <begin position="81"/>
        <end position="84"/>
    </location>
</feature>
<feature type="region of interest" description="G4" evidence="1">
    <location>
        <begin position="136"/>
        <end position="139"/>
    </location>
</feature>
<feature type="region of interest" description="G5" evidence="1">
    <location>
        <begin position="174"/>
        <end position="176"/>
    </location>
</feature>
<feature type="binding site" evidence="2">
    <location>
        <begin position="19"/>
        <end position="26"/>
    </location>
    <ligand>
        <name>GTP</name>
        <dbReference type="ChEBI" id="CHEBI:37565"/>
    </ligand>
</feature>
<feature type="binding site" evidence="2">
    <location>
        <position position="26"/>
    </location>
    <ligand>
        <name>Mg(2+)</name>
        <dbReference type="ChEBI" id="CHEBI:18420"/>
    </ligand>
</feature>
<feature type="binding site" evidence="2">
    <location>
        <begin position="81"/>
        <end position="85"/>
    </location>
    <ligand>
        <name>GTP</name>
        <dbReference type="ChEBI" id="CHEBI:37565"/>
    </ligand>
</feature>
<feature type="binding site" evidence="2">
    <location>
        <begin position="136"/>
        <end position="139"/>
    </location>
    <ligand>
        <name>GTP</name>
        <dbReference type="ChEBI" id="CHEBI:37565"/>
    </ligand>
</feature>
<dbReference type="EC" id="3.6.5.3" evidence="2"/>
<dbReference type="EMBL" id="CP000082">
    <property type="protein sequence ID" value="AAZ18251.1"/>
    <property type="molecule type" value="Genomic_DNA"/>
</dbReference>
<dbReference type="EMBL" id="CP000082">
    <property type="protein sequence ID" value="AAZ19742.1"/>
    <property type="molecule type" value="Genomic_DNA"/>
</dbReference>
<dbReference type="RefSeq" id="WP_011279689.1">
    <property type="nucleotide sequence ID" value="NC_007204.1"/>
</dbReference>
<dbReference type="SMR" id="Q4FQG6"/>
<dbReference type="STRING" id="259536.Psyc_0383"/>
<dbReference type="KEGG" id="par:Psyc_0383"/>
<dbReference type="KEGG" id="par:Psyc_1894"/>
<dbReference type="eggNOG" id="COG0050">
    <property type="taxonomic scope" value="Bacteria"/>
</dbReference>
<dbReference type="HOGENOM" id="CLU_007265_0_0_6"/>
<dbReference type="OrthoDB" id="9803139at2"/>
<dbReference type="Proteomes" id="UP000000546">
    <property type="component" value="Chromosome"/>
</dbReference>
<dbReference type="GO" id="GO:0005829">
    <property type="term" value="C:cytosol"/>
    <property type="evidence" value="ECO:0007669"/>
    <property type="project" value="TreeGrafter"/>
</dbReference>
<dbReference type="GO" id="GO:0005525">
    <property type="term" value="F:GTP binding"/>
    <property type="evidence" value="ECO:0007669"/>
    <property type="project" value="UniProtKB-UniRule"/>
</dbReference>
<dbReference type="GO" id="GO:0003924">
    <property type="term" value="F:GTPase activity"/>
    <property type="evidence" value="ECO:0007669"/>
    <property type="project" value="InterPro"/>
</dbReference>
<dbReference type="GO" id="GO:0097216">
    <property type="term" value="F:guanosine tetraphosphate binding"/>
    <property type="evidence" value="ECO:0007669"/>
    <property type="project" value="UniProtKB-ARBA"/>
</dbReference>
<dbReference type="GO" id="GO:0003746">
    <property type="term" value="F:translation elongation factor activity"/>
    <property type="evidence" value="ECO:0007669"/>
    <property type="project" value="UniProtKB-UniRule"/>
</dbReference>
<dbReference type="CDD" id="cd01884">
    <property type="entry name" value="EF_Tu"/>
    <property type="match status" value="1"/>
</dbReference>
<dbReference type="CDD" id="cd03697">
    <property type="entry name" value="EFTU_II"/>
    <property type="match status" value="1"/>
</dbReference>
<dbReference type="CDD" id="cd03707">
    <property type="entry name" value="EFTU_III"/>
    <property type="match status" value="1"/>
</dbReference>
<dbReference type="FunFam" id="2.40.30.10:FF:000001">
    <property type="entry name" value="Elongation factor Tu"/>
    <property type="match status" value="1"/>
</dbReference>
<dbReference type="FunFam" id="3.40.50.300:FF:000003">
    <property type="entry name" value="Elongation factor Tu"/>
    <property type="match status" value="1"/>
</dbReference>
<dbReference type="Gene3D" id="3.40.50.300">
    <property type="entry name" value="P-loop containing nucleotide triphosphate hydrolases"/>
    <property type="match status" value="1"/>
</dbReference>
<dbReference type="Gene3D" id="2.40.30.10">
    <property type="entry name" value="Translation factors"/>
    <property type="match status" value="2"/>
</dbReference>
<dbReference type="HAMAP" id="MF_00118_B">
    <property type="entry name" value="EF_Tu_B"/>
    <property type="match status" value="1"/>
</dbReference>
<dbReference type="InterPro" id="IPR041709">
    <property type="entry name" value="EF-Tu_GTP-bd"/>
</dbReference>
<dbReference type="InterPro" id="IPR050055">
    <property type="entry name" value="EF-Tu_GTPase"/>
</dbReference>
<dbReference type="InterPro" id="IPR004161">
    <property type="entry name" value="EFTu-like_2"/>
</dbReference>
<dbReference type="InterPro" id="IPR033720">
    <property type="entry name" value="EFTU_2"/>
</dbReference>
<dbReference type="InterPro" id="IPR031157">
    <property type="entry name" value="G_TR_CS"/>
</dbReference>
<dbReference type="InterPro" id="IPR027417">
    <property type="entry name" value="P-loop_NTPase"/>
</dbReference>
<dbReference type="InterPro" id="IPR005225">
    <property type="entry name" value="Small_GTP-bd"/>
</dbReference>
<dbReference type="InterPro" id="IPR000795">
    <property type="entry name" value="T_Tr_GTP-bd_dom"/>
</dbReference>
<dbReference type="InterPro" id="IPR009000">
    <property type="entry name" value="Transl_B-barrel_sf"/>
</dbReference>
<dbReference type="InterPro" id="IPR009001">
    <property type="entry name" value="Transl_elong_EF1A/Init_IF2_C"/>
</dbReference>
<dbReference type="InterPro" id="IPR004541">
    <property type="entry name" value="Transl_elong_EFTu/EF1A_bac/org"/>
</dbReference>
<dbReference type="InterPro" id="IPR004160">
    <property type="entry name" value="Transl_elong_EFTu/EF1A_C"/>
</dbReference>
<dbReference type="NCBIfam" id="TIGR00485">
    <property type="entry name" value="EF-Tu"/>
    <property type="match status" value="1"/>
</dbReference>
<dbReference type="NCBIfam" id="NF000766">
    <property type="entry name" value="PRK00049.1"/>
    <property type="match status" value="1"/>
</dbReference>
<dbReference type="NCBIfam" id="NF009372">
    <property type="entry name" value="PRK12735.1"/>
    <property type="match status" value="1"/>
</dbReference>
<dbReference type="NCBIfam" id="NF009373">
    <property type="entry name" value="PRK12736.1"/>
    <property type="match status" value="1"/>
</dbReference>
<dbReference type="NCBIfam" id="TIGR00231">
    <property type="entry name" value="small_GTP"/>
    <property type="match status" value="1"/>
</dbReference>
<dbReference type="PANTHER" id="PTHR43721:SF22">
    <property type="entry name" value="ELONGATION FACTOR TU, MITOCHONDRIAL"/>
    <property type="match status" value="1"/>
</dbReference>
<dbReference type="PANTHER" id="PTHR43721">
    <property type="entry name" value="ELONGATION FACTOR TU-RELATED"/>
    <property type="match status" value="1"/>
</dbReference>
<dbReference type="Pfam" id="PF00009">
    <property type="entry name" value="GTP_EFTU"/>
    <property type="match status" value="1"/>
</dbReference>
<dbReference type="Pfam" id="PF03144">
    <property type="entry name" value="GTP_EFTU_D2"/>
    <property type="match status" value="1"/>
</dbReference>
<dbReference type="Pfam" id="PF03143">
    <property type="entry name" value="GTP_EFTU_D3"/>
    <property type="match status" value="1"/>
</dbReference>
<dbReference type="PRINTS" id="PR00315">
    <property type="entry name" value="ELONGATNFCT"/>
</dbReference>
<dbReference type="SUPFAM" id="SSF50465">
    <property type="entry name" value="EF-Tu/eEF-1alpha/eIF2-gamma C-terminal domain"/>
    <property type="match status" value="1"/>
</dbReference>
<dbReference type="SUPFAM" id="SSF52540">
    <property type="entry name" value="P-loop containing nucleoside triphosphate hydrolases"/>
    <property type="match status" value="1"/>
</dbReference>
<dbReference type="SUPFAM" id="SSF50447">
    <property type="entry name" value="Translation proteins"/>
    <property type="match status" value="1"/>
</dbReference>
<dbReference type="PROSITE" id="PS00301">
    <property type="entry name" value="G_TR_1"/>
    <property type="match status" value="1"/>
</dbReference>
<dbReference type="PROSITE" id="PS51722">
    <property type="entry name" value="G_TR_2"/>
    <property type="match status" value="1"/>
</dbReference>
<evidence type="ECO:0000250" key="1"/>
<evidence type="ECO:0000255" key="2">
    <source>
        <dbReference type="HAMAP-Rule" id="MF_00118"/>
    </source>
</evidence>
<accession>Q4FQG6</accession>
<protein>
    <recommendedName>
        <fullName evidence="2">Elongation factor Tu</fullName>
        <shortName evidence="2">EF-Tu</shortName>
        <ecNumber evidence="2">3.6.5.3</ecNumber>
    </recommendedName>
</protein>
<reference key="1">
    <citation type="journal article" date="2010" name="Appl. Environ. Microbiol.">
        <title>The genome sequence of Psychrobacter arcticus 273-4, a psychroactive Siberian permafrost bacterium, reveals mechanisms for adaptation to low-temperature growth.</title>
        <authorList>
            <person name="Ayala-del-Rio H.L."/>
            <person name="Chain P.S."/>
            <person name="Grzymski J.J."/>
            <person name="Ponder M.A."/>
            <person name="Ivanova N."/>
            <person name="Bergholz P.W."/>
            <person name="Di Bartolo G."/>
            <person name="Hauser L."/>
            <person name="Land M."/>
            <person name="Bakermans C."/>
            <person name="Rodrigues D."/>
            <person name="Klappenbach J."/>
            <person name="Zarka D."/>
            <person name="Larimer F."/>
            <person name="Richardson P."/>
            <person name="Murray A."/>
            <person name="Thomashow M."/>
            <person name="Tiedje J.M."/>
        </authorList>
    </citation>
    <scope>NUCLEOTIDE SEQUENCE [LARGE SCALE GENOMIC DNA]</scope>
    <source>
        <strain>DSM 17307 / VKM B-2377 / 273-4</strain>
    </source>
</reference>